<protein>
    <recommendedName>
        <fullName evidence="1">Phosphoribosylformylglycinamidine cyclo-ligase</fullName>
        <ecNumber evidence="1">6.3.3.1</ecNumber>
    </recommendedName>
    <alternativeName>
        <fullName evidence="1">AIR synthase</fullName>
    </alternativeName>
    <alternativeName>
        <fullName evidence="1">AIRS</fullName>
    </alternativeName>
    <alternativeName>
        <fullName evidence="1">Phosphoribosyl-aminoimidazole synthetase</fullName>
    </alternativeName>
</protein>
<evidence type="ECO:0000255" key="1">
    <source>
        <dbReference type="HAMAP-Rule" id="MF_00741"/>
    </source>
</evidence>
<reference key="1">
    <citation type="submission" date="2007-02" db="EMBL/GenBank/DDBJ databases">
        <title>Complete sequence of Clostridium thermocellum ATCC 27405.</title>
        <authorList>
            <consortium name="US DOE Joint Genome Institute"/>
            <person name="Copeland A."/>
            <person name="Lucas S."/>
            <person name="Lapidus A."/>
            <person name="Barry K."/>
            <person name="Detter J.C."/>
            <person name="Glavina del Rio T."/>
            <person name="Hammon N."/>
            <person name="Israni S."/>
            <person name="Dalin E."/>
            <person name="Tice H."/>
            <person name="Pitluck S."/>
            <person name="Chertkov O."/>
            <person name="Brettin T."/>
            <person name="Bruce D."/>
            <person name="Han C."/>
            <person name="Tapia R."/>
            <person name="Gilna P."/>
            <person name="Schmutz J."/>
            <person name="Larimer F."/>
            <person name="Land M."/>
            <person name="Hauser L."/>
            <person name="Kyrpides N."/>
            <person name="Mikhailova N."/>
            <person name="Wu J.H.D."/>
            <person name="Newcomb M."/>
            <person name="Richardson P."/>
        </authorList>
    </citation>
    <scope>NUCLEOTIDE SEQUENCE [LARGE SCALE GENOMIC DNA]</scope>
    <source>
        <strain>ATCC 27405 / DSM 1237 / JCM 9322 / NBRC 103400 / NCIMB 10682 / NRRL B-4536 / VPI 7372</strain>
    </source>
</reference>
<comment type="catalytic activity">
    <reaction evidence="1">
        <text>2-formamido-N(1)-(5-O-phospho-beta-D-ribosyl)acetamidine + ATP = 5-amino-1-(5-phospho-beta-D-ribosyl)imidazole + ADP + phosphate + H(+)</text>
        <dbReference type="Rhea" id="RHEA:23032"/>
        <dbReference type="ChEBI" id="CHEBI:15378"/>
        <dbReference type="ChEBI" id="CHEBI:30616"/>
        <dbReference type="ChEBI" id="CHEBI:43474"/>
        <dbReference type="ChEBI" id="CHEBI:137981"/>
        <dbReference type="ChEBI" id="CHEBI:147287"/>
        <dbReference type="ChEBI" id="CHEBI:456216"/>
        <dbReference type="EC" id="6.3.3.1"/>
    </reaction>
</comment>
<comment type="pathway">
    <text evidence="1">Purine metabolism; IMP biosynthesis via de novo pathway; 5-amino-1-(5-phospho-D-ribosyl)imidazole from N(2)-formyl-N(1)-(5-phospho-D-ribosyl)glycinamide: step 2/2.</text>
</comment>
<comment type="subcellular location">
    <subcellularLocation>
        <location evidence="1">Cytoplasm</location>
    </subcellularLocation>
</comment>
<comment type="similarity">
    <text evidence="1">Belongs to the AIR synthase family.</text>
</comment>
<sequence>MTTYKDAGVDVEAGYEAVRLMRNDVKRTFRPEVLTDIGGFGGLFGLNKDKYSEPVLVSGTDGVGTKLKIAFLLDKHDTVGIDCVAMCVNDIVCSGAEPLFFLDYIALGKNRPEKVAQIVKGIADGCVEAGCALIGGETAEMPGFYPEDEYDLAGFAVGIVEKSKIIDGSKIKAGDKLIGLASSGIHSNGYSLVRKILAPTAKKLAEEIKMLGTTLGEELIKPTRLYVKTILDLKEKFEIKGIAHITGGGFIENIPRMLPQGLGVKVVRGSWPVLPIFTLLKDLGNLDEMDMYNTFNMGIGMTIAVDAEIANSVVEYLNKDKEQAYIIGEVVSDKEGLEIC</sequence>
<name>PUR5_ACET2</name>
<organism>
    <name type="scientific">Acetivibrio thermocellus (strain ATCC 27405 / DSM 1237 / JCM 9322 / NBRC 103400 / NCIMB 10682 / NRRL B-4536 / VPI 7372)</name>
    <name type="common">Clostridium thermocellum</name>
    <dbReference type="NCBI Taxonomy" id="203119"/>
    <lineage>
        <taxon>Bacteria</taxon>
        <taxon>Bacillati</taxon>
        <taxon>Bacillota</taxon>
        <taxon>Clostridia</taxon>
        <taxon>Eubacteriales</taxon>
        <taxon>Oscillospiraceae</taxon>
        <taxon>Acetivibrio</taxon>
    </lineage>
</organism>
<accession>A3DEV1</accession>
<feature type="chain" id="PRO_1000062157" description="Phosphoribosylformylglycinamidine cyclo-ligase">
    <location>
        <begin position="1"/>
        <end position="340"/>
    </location>
</feature>
<dbReference type="EC" id="6.3.3.1" evidence="1"/>
<dbReference type="EMBL" id="CP000568">
    <property type="protein sequence ID" value="ABN52480.1"/>
    <property type="molecule type" value="Genomic_DNA"/>
</dbReference>
<dbReference type="RefSeq" id="WP_003517454.1">
    <property type="nucleotide sequence ID" value="NC_009012.1"/>
</dbReference>
<dbReference type="SMR" id="A3DEV1"/>
<dbReference type="STRING" id="203119.Cthe_1248"/>
<dbReference type="GeneID" id="35805903"/>
<dbReference type="KEGG" id="cth:Cthe_1248"/>
<dbReference type="eggNOG" id="COG0150">
    <property type="taxonomic scope" value="Bacteria"/>
</dbReference>
<dbReference type="HOGENOM" id="CLU_047116_0_0_9"/>
<dbReference type="OrthoDB" id="9802507at2"/>
<dbReference type="UniPathway" id="UPA00074">
    <property type="reaction ID" value="UER00129"/>
</dbReference>
<dbReference type="Proteomes" id="UP000002145">
    <property type="component" value="Chromosome"/>
</dbReference>
<dbReference type="GO" id="GO:0005829">
    <property type="term" value="C:cytosol"/>
    <property type="evidence" value="ECO:0007669"/>
    <property type="project" value="TreeGrafter"/>
</dbReference>
<dbReference type="GO" id="GO:0005524">
    <property type="term" value="F:ATP binding"/>
    <property type="evidence" value="ECO:0007669"/>
    <property type="project" value="UniProtKB-KW"/>
</dbReference>
<dbReference type="GO" id="GO:0004637">
    <property type="term" value="F:phosphoribosylamine-glycine ligase activity"/>
    <property type="evidence" value="ECO:0007669"/>
    <property type="project" value="TreeGrafter"/>
</dbReference>
<dbReference type="GO" id="GO:0004641">
    <property type="term" value="F:phosphoribosylformylglycinamidine cyclo-ligase activity"/>
    <property type="evidence" value="ECO:0007669"/>
    <property type="project" value="UniProtKB-UniRule"/>
</dbReference>
<dbReference type="GO" id="GO:0006189">
    <property type="term" value="P:'de novo' IMP biosynthetic process"/>
    <property type="evidence" value="ECO:0007669"/>
    <property type="project" value="UniProtKB-UniRule"/>
</dbReference>
<dbReference type="GO" id="GO:0046084">
    <property type="term" value="P:adenine biosynthetic process"/>
    <property type="evidence" value="ECO:0007669"/>
    <property type="project" value="TreeGrafter"/>
</dbReference>
<dbReference type="CDD" id="cd02196">
    <property type="entry name" value="PurM"/>
    <property type="match status" value="1"/>
</dbReference>
<dbReference type="FunFam" id="3.30.1330.10:FF:000001">
    <property type="entry name" value="Phosphoribosylformylglycinamidine cyclo-ligase"/>
    <property type="match status" value="1"/>
</dbReference>
<dbReference type="FunFam" id="3.90.650.10:FF:000001">
    <property type="entry name" value="Phosphoribosylformylglycinamidine cyclo-ligase"/>
    <property type="match status" value="1"/>
</dbReference>
<dbReference type="Gene3D" id="3.90.650.10">
    <property type="entry name" value="PurM-like C-terminal domain"/>
    <property type="match status" value="1"/>
</dbReference>
<dbReference type="Gene3D" id="3.30.1330.10">
    <property type="entry name" value="PurM-like, N-terminal domain"/>
    <property type="match status" value="1"/>
</dbReference>
<dbReference type="HAMAP" id="MF_00741">
    <property type="entry name" value="AIRS"/>
    <property type="match status" value="1"/>
</dbReference>
<dbReference type="InterPro" id="IPR010918">
    <property type="entry name" value="PurM-like_C_dom"/>
</dbReference>
<dbReference type="InterPro" id="IPR036676">
    <property type="entry name" value="PurM-like_C_sf"/>
</dbReference>
<dbReference type="InterPro" id="IPR016188">
    <property type="entry name" value="PurM-like_N"/>
</dbReference>
<dbReference type="InterPro" id="IPR036921">
    <property type="entry name" value="PurM-like_N_sf"/>
</dbReference>
<dbReference type="InterPro" id="IPR004733">
    <property type="entry name" value="PurM_cligase"/>
</dbReference>
<dbReference type="NCBIfam" id="TIGR00878">
    <property type="entry name" value="purM"/>
    <property type="match status" value="1"/>
</dbReference>
<dbReference type="PANTHER" id="PTHR10520:SF12">
    <property type="entry name" value="TRIFUNCTIONAL PURINE BIOSYNTHETIC PROTEIN ADENOSINE-3"/>
    <property type="match status" value="1"/>
</dbReference>
<dbReference type="PANTHER" id="PTHR10520">
    <property type="entry name" value="TRIFUNCTIONAL PURINE BIOSYNTHETIC PROTEIN ADENOSINE-3-RELATED"/>
    <property type="match status" value="1"/>
</dbReference>
<dbReference type="Pfam" id="PF00586">
    <property type="entry name" value="AIRS"/>
    <property type="match status" value="1"/>
</dbReference>
<dbReference type="Pfam" id="PF02769">
    <property type="entry name" value="AIRS_C"/>
    <property type="match status" value="1"/>
</dbReference>
<dbReference type="SUPFAM" id="SSF56042">
    <property type="entry name" value="PurM C-terminal domain-like"/>
    <property type="match status" value="1"/>
</dbReference>
<dbReference type="SUPFAM" id="SSF55326">
    <property type="entry name" value="PurM N-terminal domain-like"/>
    <property type="match status" value="1"/>
</dbReference>
<proteinExistence type="inferred from homology"/>
<keyword id="KW-0067">ATP-binding</keyword>
<keyword id="KW-0963">Cytoplasm</keyword>
<keyword id="KW-0436">Ligase</keyword>
<keyword id="KW-0547">Nucleotide-binding</keyword>
<keyword id="KW-0658">Purine biosynthesis</keyword>
<keyword id="KW-1185">Reference proteome</keyword>
<gene>
    <name evidence="1" type="primary">purM</name>
    <name type="ordered locus">Cthe_1248</name>
</gene>